<keyword id="KW-0143">Chaperone</keyword>
<keyword id="KW-0963">Cytoplasm</keyword>
<keyword id="KW-1185">Reference proteome</keyword>
<keyword id="KW-0690">Ribosome biogenesis</keyword>
<keyword id="KW-0698">rRNA processing</keyword>
<accession>Q6NGI4</accession>
<name>RIMM_CORDI</name>
<feature type="chain" id="PRO_0000163280" description="Ribosome maturation factor RimM">
    <location>
        <begin position="1"/>
        <end position="166"/>
    </location>
</feature>
<feature type="domain" description="PRC barrel" evidence="1">
    <location>
        <begin position="91"/>
        <end position="163"/>
    </location>
</feature>
<reference key="1">
    <citation type="journal article" date="2003" name="Nucleic Acids Res.">
        <title>The complete genome sequence and analysis of Corynebacterium diphtheriae NCTC13129.</title>
        <authorList>
            <person name="Cerdeno-Tarraga A.-M."/>
            <person name="Efstratiou A."/>
            <person name="Dover L.G."/>
            <person name="Holden M.T.G."/>
            <person name="Pallen M.J."/>
            <person name="Bentley S.D."/>
            <person name="Besra G.S."/>
            <person name="Churcher C.M."/>
            <person name="James K.D."/>
            <person name="De Zoysa A."/>
            <person name="Chillingworth T."/>
            <person name="Cronin A."/>
            <person name="Dowd L."/>
            <person name="Feltwell T."/>
            <person name="Hamlin N."/>
            <person name="Holroyd S."/>
            <person name="Jagels K."/>
            <person name="Moule S."/>
            <person name="Quail M.A."/>
            <person name="Rabbinowitsch E."/>
            <person name="Rutherford K.M."/>
            <person name="Thomson N.R."/>
            <person name="Unwin L."/>
            <person name="Whitehead S."/>
            <person name="Barrell B.G."/>
            <person name="Parkhill J."/>
        </authorList>
    </citation>
    <scope>NUCLEOTIDE SEQUENCE [LARGE SCALE GENOMIC DNA]</scope>
    <source>
        <strain>ATCC 700971 / NCTC 13129 / Biotype gravis</strain>
    </source>
</reference>
<comment type="function">
    <text evidence="1">An accessory protein needed during the final step in the assembly of 30S ribosomal subunit, possibly for assembly of the head region. Essential for efficient processing of 16S rRNA. May be needed both before and after RbfA during the maturation of 16S rRNA. It has affinity for free ribosomal 30S subunits but not for 70S ribosomes.</text>
</comment>
<comment type="subunit">
    <text evidence="1">Binds ribosomal protein uS19.</text>
</comment>
<comment type="subcellular location">
    <subcellularLocation>
        <location evidence="1">Cytoplasm</location>
    </subcellularLocation>
</comment>
<comment type="domain">
    <text evidence="1">The PRC barrel domain binds ribosomal protein uS19.</text>
</comment>
<comment type="similarity">
    <text evidence="1">Belongs to the RimM family.</text>
</comment>
<organism>
    <name type="scientific">Corynebacterium diphtheriae (strain ATCC 700971 / NCTC 13129 / Biotype gravis)</name>
    <dbReference type="NCBI Taxonomy" id="257309"/>
    <lineage>
        <taxon>Bacteria</taxon>
        <taxon>Bacillati</taxon>
        <taxon>Actinomycetota</taxon>
        <taxon>Actinomycetes</taxon>
        <taxon>Mycobacteriales</taxon>
        <taxon>Corynebacteriaceae</taxon>
        <taxon>Corynebacterium</taxon>
    </lineage>
</organism>
<gene>
    <name evidence="1" type="primary">rimM</name>
    <name type="ordered locus">DIP1531</name>
</gene>
<proteinExistence type="inferred from homology"/>
<evidence type="ECO:0000255" key="1">
    <source>
        <dbReference type="HAMAP-Rule" id="MF_00014"/>
    </source>
</evidence>
<protein>
    <recommendedName>
        <fullName evidence="1">Ribosome maturation factor RimM</fullName>
    </recommendedName>
</protein>
<dbReference type="EMBL" id="BX248358">
    <property type="protein sequence ID" value="CAE50057.1"/>
    <property type="molecule type" value="Genomic_DNA"/>
</dbReference>
<dbReference type="RefSeq" id="WP_010935130.1">
    <property type="nucleotide sequence ID" value="NC_002935.2"/>
</dbReference>
<dbReference type="SMR" id="Q6NGI4"/>
<dbReference type="STRING" id="257309.DIP1531"/>
<dbReference type="KEGG" id="cdi:DIP1531"/>
<dbReference type="HOGENOM" id="CLU_077636_0_0_11"/>
<dbReference type="Proteomes" id="UP000002198">
    <property type="component" value="Chromosome"/>
</dbReference>
<dbReference type="GO" id="GO:0005737">
    <property type="term" value="C:cytoplasm"/>
    <property type="evidence" value="ECO:0007669"/>
    <property type="project" value="UniProtKB-SubCell"/>
</dbReference>
<dbReference type="GO" id="GO:0005840">
    <property type="term" value="C:ribosome"/>
    <property type="evidence" value="ECO:0007669"/>
    <property type="project" value="InterPro"/>
</dbReference>
<dbReference type="GO" id="GO:0043022">
    <property type="term" value="F:ribosome binding"/>
    <property type="evidence" value="ECO:0007669"/>
    <property type="project" value="InterPro"/>
</dbReference>
<dbReference type="GO" id="GO:0042274">
    <property type="term" value="P:ribosomal small subunit biogenesis"/>
    <property type="evidence" value="ECO:0007669"/>
    <property type="project" value="UniProtKB-UniRule"/>
</dbReference>
<dbReference type="GO" id="GO:0006364">
    <property type="term" value="P:rRNA processing"/>
    <property type="evidence" value="ECO:0007669"/>
    <property type="project" value="UniProtKB-UniRule"/>
</dbReference>
<dbReference type="Gene3D" id="2.30.30.240">
    <property type="entry name" value="PRC-barrel domain"/>
    <property type="match status" value="1"/>
</dbReference>
<dbReference type="Gene3D" id="2.40.30.60">
    <property type="entry name" value="RimM"/>
    <property type="match status" value="1"/>
</dbReference>
<dbReference type="HAMAP" id="MF_00014">
    <property type="entry name" value="Ribosome_mat_RimM"/>
    <property type="match status" value="1"/>
</dbReference>
<dbReference type="InterPro" id="IPR011033">
    <property type="entry name" value="PRC_barrel-like_sf"/>
</dbReference>
<dbReference type="InterPro" id="IPR056792">
    <property type="entry name" value="PRC_RimM"/>
</dbReference>
<dbReference type="InterPro" id="IPR011961">
    <property type="entry name" value="RimM"/>
</dbReference>
<dbReference type="InterPro" id="IPR002676">
    <property type="entry name" value="RimM_N"/>
</dbReference>
<dbReference type="InterPro" id="IPR036976">
    <property type="entry name" value="RimM_N_sf"/>
</dbReference>
<dbReference type="InterPro" id="IPR009000">
    <property type="entry name" value="Transl_B-barrel_sf"/>
</dbReference>
<dbReference type="NCBIfam" id="TIGR02273">
    <property type="entry name" value="16S_RimM"/>
    <property type="match status" value="1"/>
</dbReference>
<dbReference type="PANTHER" id="PTHR33692">
    <property type="entry name" value="RIBOSOME MATURATION FACTOR RIMM"/>
    <property type="match status" value="1"/>
</dbReference>
<dbReference type="PANTHER" id="PTHR33692:SF1">
    <property type="entry name" value="RIBOSOME MATURATION FACTOR RIMM"/>
    <property type="match status" value="1"/>
</dbReference>
<dbReference type="Pfam" id="PF24986">
    <property type="entry name" value="PRC_RimM"/>
    <property type="match status" value="1"/>
</dbReference>
<dbReference type="Pfam" id="PF01782">
    <property type="entry name" value="RimM"/>
    <property type="match status" value="1"/>
</dbReference>
<dbReference type="SUPFAM" id="SSF50346">
    <property type="entry name" value="PRC-barrel domain"/>
    <property type="match status" value="1"/>
</dbReference>
<dbReference type="SUPFAM" id="SSF50447">
    <property type="entry name" value="Translation proteins"/>
    <property type="match status" value="1"/>
</dbReference>
<sequence>MELMIGRVVKSHGIRGEVAIEVTTEEPEIRFAQGEVLNGRQGGKEHSLTIASVRPHQNRLLVKFKEIADRTAADSLRGTRFFAAPLDDDVDDGFYDHELEGLAVIHGEEKIGEVSGVIHGPAQSLLEVTLESGKEVLIPFVHDIVPEVDLDAGTCVITPPEGLLEL</sequence>